<organism>
    <name type="scientific">Streptomyces griseus subsp. griseus (strain JCM 4626 / CBS 651.72 / NBRC 13350 / KCC S-0626 / ISP 5235)</name>
    <dbReference type="NCBI Taxonomy" id="455632"/>
    <lineage>
        <taxon>Bacteria</taxon>
        <taxon>Bacillati</taxon>
        <taxon>Actinomycetota</taxon>
        <taxon>Actinomycetes</taxon>
        <taxon>Kitasatosporales</taxon>
        <taxon>Streptomycetaceae</taxon>
        <taxon>Streptomyces</taxon>
    </lineage>
</organism>
<sequence length="622" mass="69567">MADVPADLAAVWPRVLEQLLGEGQQGIEPKDKQWIERCQPLALVADTALLAVPNEWGKRVLEGRLAPLISETLTRECGRPIRIAITVDDSAGEPPAPPAPPMHQSHQGPQGHRYPSQQRDDAPRGDTYDGYGHRPSDDGMPTARPAYPDYQQQRPEPGAWPRTQEDLSWQQPRHGGYQDREQPPGEPYRESEAYQRESEQYREQPPEPWREPYGAGRPQQHDYRSQPPEHQGYEQQRPDRQDQQQPGPRPGGHGPGRTGGSVPGPMGAQPSPAPGPGEPHARLNPKYLFDTFVIGASNRFAHAAAVAVAEAPAKAYNPLFIYGESGLGKTHLLHAIGHYARSLYPGTRVRYVSSEEFTNEFINSIRDGKGDTFRKRYRDVDILLVDDIQFLASKESTQEEFFHTFNTLHNANKQIVLSSDRPPKQLVTLEDRLRNRFEWGLTTDVQPPELETRIAILRKKAVQEQLNAPPEVLEFIASRISRNIRELEGALIRVTAFASLNRQPVDLGLTEIVLKDLIPGGEESAPEITAPAIMAATADYFGLTVDDLCGSSRSRVLVTARQIAMYLCRELTDLSLPKIGAQFGGRDHTTVMHADRKIRALMAERRSIYNQVTELTNRIKNG</sequence>
<dbReference type="EMBL" id="AP009493">
    <property type="protein sequence ID" value="BAG20529.1"/>
    <property type="molecule type" value="Genomic_DNA"/>
</dbReference>
<dbReference type="RefSeq" id="WP_012380083.1">
    <property type="nucleotide sequence ID" value="NC_010572.1"/>
</dbReference>
<dbReference type="SMR" id="B1VPF0"/>
<dbReference type="KEGG" id="sgr:SGR_3700"/>
<dbReference type="eggNOG" id="COG0593">
    <property type="taxonomic scope" value="Bacteria"/>
</dbReference>
<dbReference type="HOGENOM" id="CLU_026910_2_0_11"/>
<dbReference type="Proteomes" id="UP000001685">
    <property type="component" value="Chromosome"/>
</dbReference>
<dbReference type="GO" id="GO:0005737">
    <property type="term" value="C:cytoplasm"/>
    <property type="evidence" value="ECO:0007669"/>
    <property type="project" value="UniProtKB-SubCell"/>
</dbReference>
<dbReference type="GO" id="GO:0005886">
    <property type="term" value="C:plasma membrane"/>
    <property type="evidence" value="ECO:0007669"/>
    <property type="project" value="TreeGrafter"/>
</dbReference>
<dbReference type="GO" id="GO:0005524">
    <property type="term" value="F:ATP binding"/>
    <property type="evidence" value="ECO:0007669"/>
    <property type="project" value="UniProtKB-UniRule"/>
</dbReference>
<dbReference type="GO" id="GO:0016887">
    <property type="term" value="F:ATP hydrolysis activity"/>
    <property type="evidence" value="ECO:0007669"/>
    <property type="project" value="InterPro"/>
</dbReference>
<dbReference type="GO" id="GO:0003688">
    <property type="term" value="F:DNA replication origin binding"/>
    <property type="evidence" value="ECO:0007669"/>
    <property type="project" value="UniProtKB-UniRule"/>
</dbReference>
<dbReference type="GO" id="GO:0008289">
    <property type="term" value="F:lipid binding"/>
    <property type="evidence" value="ECO:0007669"/>
    <property type="project" value="UniProtKB-KW"/>
</dbReference>
<dbReference type="GO" id="GO:0006270">
    <property type="term" value="P:DNA replication initiation"/>
    <property type="evidence" value="ECO:0007669"/>
    <property type="project" value="UniProtKB-UniRule"/>
</dbReference>
<dbReference type="GO" id="GO:0006275">
    <property type="term" value="P:regulation of DNA replication"/>
    <property type="evidence" value="ECO:0007669"/>
    <property type="project" value="UniProtKB-UniRule"/>
</dbReference>
<dbReference type="CDD" id="cd00009">
    <property type="entry name" value="AAA"/>
    <property type="match status" value="1"/>
</dbReference>
<dbReference type="CDD" id="cd06571">
    <property type="entry name" value="Bac_DnaA_C"/>
    <property type="match status" value="1"/>
</dbReference>
<dbReference type="FunFam" id="1.10.1750.10:FF:000002">
    <property type="entry name" value="Chromosomal replication initiator protein DnaA"/>
    <property type="match status" value="1"/>
</dbReference>
<dbReference type="FunFam" id="1.10.8.60:FF:000003">
    <property type="entry name" value="Chromosomal replication initiator protein DnaA"/>
    <property type="match status" value="1"/>
</dbReference>
<dbReference type="FunFam" id="3.40.50.300:FF:000150">
    <property type="entry name" value="Chromosomal replication initiator protein DnaA"/>
    <property type="match status" value="1"/>
</dbReference>
<dbReference type="Gene3D" id="1.10.1750.10">
    <property type="match status" value="1"/>
</dbReference>
<dbReference type="Gene3D" id="1.10.8.60">
    <property type="match status" value="1"/>
</dbReference>
<dbReference type="Gene3D" id="3.30.300.180">
    <property type="match status" value="1"/>
</dbReference>
<dbReference type="Gene3D" id="3.40.50.300">
    <property type="entry name" value="P-loop containing nucleotide triphosphate hydrolases"/>
    <property type="match status" value="1"/>
</dbReference>
<dbReference type="HAMAP" id="MF_00377">
    <property type="entry name" value="DnaA_bact"/>
    <property type="match status" value="1"/>
</dbReference>
<dbReference type="InterPro" id="IPR003593">
    <property type="entry name" value="AAA+_ATPase"/>
</dbReference>
<dbReference type="InterPro" id="IPR001957">
    <property type="entry name" value="Chromosome_initiator_DnaA"/>
</dbReference>
<dbReference type="InterPro" id="IPR020591">
    <property type="entry name" value="Chromosome_initiator_DnaA-like"/>
</dbReference>
<dbReference type="InterPro" id="IPR018312">
    <property type="entry name" value="Chromosome_initiator_DnaA_CS"/>
</dbReference>
<dbReference type="InterPro" id="IPR013159">
    <property type="entry name" value="DnaA_C"/>
</dbReference>
<dbReference type="InterPro" id="IPR013317">
    <property type="entry name" value="DnaA_dom"/>
</dbReference>
<dbReference type="InterPro" id="IPR038454">
    <property type="entry name" value="DnaA_N_sf"/>
</dbReference>
<dbReference type="InterPro" id="IPR027417">
    <property type="entry name" value="P-loop_NTPase"/>
</dbReference>
<dbReference type="InterPro" id="IPR010921">
    <property type="entry name" value="Trp_repressor/repl_initiator"/>
</dbReference>
<dbReference type="NCBIfam" id="TIGR00362">
    <property type="entry name" value="DnaA"/>
    <property type="match status" value="1"/>
</dbReference>
<dbReference type="NCBIfam" id="NF010686">
    <property type="entry name" value="PRK14086.1"/>
    <property type="match status" value="1"/>
</dbReference>
<dbReference type="PANTHER" id="PTHR30050">
    <property type="entry name" value="CHROMOSOMAL REPLICATION INITIATOR PROTEIN DNAA"/>
    <property type="match status" value="1"/>
</dbReference>
<dbReference type="PANTHER" id="PTHR30050:SF2">
    <property type="entry name" value="CHROMOSOMAL REPLICATION INITIATOR PROTEIN DNAA"/>
    <property type="match status" value="1"/>
</dbReference>
<dbReference type="Pfam" id="PF00308">
    <property type="entry name" value="Bac_DnaA"/>
    <property type="match status" value="1"/>
</dbReference>
<dbReference type="Pfam" id="PF08299">
    <property type="entry name" value="Bac_DnaA_C"/>
    <property type="match status" value="1"/>
</dbReference>
<dbReference type="PRINTS" id="PR00051">
    <property type="entry name" value="DNAA"/>
</dbReference>
<dbReference type="SMART" id="SM00382">
    <property type="entry name" value="AAA"/>
    <property type="match status" value="1"/>
</dbReference>
<dbReference type="SMART" id="SM00760">
    <property type="entry name" value="Bac_DnaA_C"/>
    <property type="match status" value="1"/>
</dbReference>
<dbReference type="SUPFAM" id="SSF52540">
    <property type="entry name" value="P-loop containing nucleoside triphosphate hydrolases"/>
    <property type="match status" value="1"/>
</dbReference>
<dbReference type="SUPFAM" id="SSF48295">
    <property type="entry name" value="TrpR-like"/>
    <property type="match status" value="1"/>
</dbReference>
<dbReference type="PROSITE" id="PS01008">
    <property type="entry name" value="DNAA"/>
    <property type="match status" value="1"/>
</dbReference>
<evidence type="ECO:0000255" key="1">
    <source>
        <dbReference type="HAMAP-Rule" id="MF_00377"/>
    </source>
</evidence>
<evidence type="ECO:0000256" key="2">
    <source>
        <dbReference type="SAM" id="MobiDB-lite"/>
    </source>
</evidence>
<proteinExistence type="inferred from homology"/>
<keyword id="KW-0067">ATP-binding</keyword>
<keyword id="KW-0963">Cytoplasm</keyword>
<keyword id="KW-0235">DNA replication</keyword>
<keyword id="KW-0238">DNA-binding</keyword>
<keyword id="KW-0446">Lipid-binding</keyword>
<keyword id="KW-0547">Nucleotide-binding</keyword>
<feature type="chain" id="PRO_1000122020" description="Chromosomal replication initiator protein DnaA">
    <location>
        <begin position="1"/>
        <end position="622"/>
    </location>
</feature>
<feature type="region of interest" description="Domain I, interacts with DnaA modulators" evidence="1">
    <location>
        <begin position="1"/>
        <end position="99"/>
    </location>
</feature>
<feature type="region of interest" description="Disordered" evidence="2">
    <location>
        <begin position="88"/>
        <end position="282"/>
    </location>
</feature>
<feature type="region of interest" description="Domain II" evidence="1">
    <location>
        <begin position="100"/>
        <end position="281"/>
    </location>
</feature>
<feature type="region of interest" description="Domain III, AAA+ region" evidence="1">
    <location>
        <begin position="282"/>
        <end position="498"/>
    </location>
</feature>
<feature type="region of interest" description="Domain IV, binds dsDNA" evidence="1">
    <location>
        <begin position="499"/>
        <end position="622"/>
    </location>
</feature>
<feature type="compositionally biased region" description="Basic and acidic residues" evidence="2">
    <location>
        <begin position="118"/>
        <end position="137"/>
    </location>
</feature>
<feature type="compositionally biased region" description="Basic and acidic residues" evidence="2">
    <location>
        <begin position="176"/>
        <end position="210"/>
    </location>
</feature>
<feature type="compositionally biased region" description="Gly residues" evidence="2">
    <location>
        <begin position="250"/>
        <end position="262"/>
    </location>
</feature>
<feature type="binding site" evidence="1">
    <location>
        <position position="326"/>
    </location>
    <ligand>
        <name>ATP</name>
        <dbReference type="ChEBI" id="CHEBI:30616"/>
    </ligand>
</feature>
<feature type="binding site" evidence="1">
    <location>
        <position position="328"/>
    </location>
    <ligand>
        <name>ATP</name>
        <dbReference type="ChEBI" id="CHEBI:30616"/>
    </ligand>
</feature>
<feature type="binding site" evidence="1">
    <location>
        <position position="329"/>
    </location>
    <ligand>
        <name>ATP</name>
        <dbReference type="ChEBI" id="CHEBI:30616"/>
    </ligand>
</feature>
<feature type="binding site" evidence="1">
    <location>
        <position position="330"/>
    </location>
    <ligand>
        <name>ATP</name>
        <dbReference type="ChEBI" id="CHEBI:30616"/>
    </ligand>
</feature>
<name>DNAA_STRGG</name>
<reference key="1">
    <citation type="journal article" date="2008" name="J. Bacteriol.">
        <title>Genome sequence of the streptomycin-producing microorganism Streptomyces griseus IFO 13350.</title>
        <authorList>
            <person name="Ohnishi Y."/>
            <person name="Ishikawa J."/>
            <person name="Hara H."/>
            <person name="Suzuki H."/>
            <person name="Ikenoya M."/>
            <person name="Ikeda H."/>
            <person name="Yamashita A."/>
            <person name="Hattori M."/>
            <person name="Horinouchi S."/>
        </authorList>
    </citation>
    <scope>NUCLEOTIDE SEQUENCE [LARGE SCALE GENOMIC DNA]</scope>
    <source>
        <strain>JCM 4626 / CBS 651.72 / NBRC 13350 / KCC S-0626 / ISP 5235</strain>
    </source>
</reference>
<comment type="function">
    <text evidence="1">Plays an essential role in the initiation and regulation of chromosomal replication. ATP-DnaA binds to the origin of replication (oriC) to initiate formation of the DNA replication initiation complex once per cell cycle. Binds the DnaA box (a 9 base pair repeat at the origin) and separates the double-stranded (ds)DNA. Forms a right-handed helical filament on oriC DNA; dsDNA binds to the exterior of the filament while single-stranded (ss)DNA is stabiized in the filament's interior. The ATP-DnaA-oriC complex binds and stabilizes one strand of the AT-rich DNA unwinding element (DUE), permitting loading of DNA polymerase. After initiation quickly degrades to an ADP-DnaA complex that is not apt for DNA replication. Binds acidic phospholipids.</text>
</comment>
<comment type="subunit">
    <text evidence="1">Oligomerizes as a right-handed, spiral filament on DNA at oriC.</text>
</comment>
<comment type="subcellular location">
    <subcellularLocation>
        <location evidence="1">Cytoplasm</location>
    </subcellularLocation>
</comment>
<comment type="domain">
    <text evidence="1">Domain I is involved in oligomerization and binding regulators, domain II is flexibile and of varying length in different bacteria, domain III forms the AAA+ region, while domain IV binds dsDNA.</text>
</comment>
<comment type="similarity">
    <text evidence="1">Belongs to the DnaA family.</text>
</comment>
<accession>B1VPF0</accession>
<protein>
    <recommendedName>
        <fullName evidence="1">Chromosomal replication initiator protein DnaA</fullName>
    </recommendedName>
</protein>
<gene>
    <name evidence="1" type="primary">dnaA</name>
    <name type="ordered locus">SGR_3700</name>
</gene>